<organism>
    <name type="scientific">Lactococcus phage p2</name>
    <name type="common">Lactococcus lactis bacteriophage p2</name>
    <dbReference type="NCBI Taxonomy" id="254252"/>
    <lineage>
        <taxon>Viruses</taxon>
        <taxon>Duplodnaviria</taxon>
        <taxon>Heunggongvirae</taxon>
        <taxon>Uroviricota</taxon>
        <taxon>Caudoviricetes</taxon>
        <taxon>Skunavirus</taxon>
    </lineage>
</organism>
<reference key="1">
    <citation type="submission" date="2010-02" db="EMBL/GenBank/DDBJ databases">
        <title>Complete genomic sequence of Lactococcus lactis phage p2.</title>
        <authorList>
            <person name="Tremblay D.M."/>
            <person name="Deveau H."/>
            <person name="Moineau S."/>
        </authorList>
    </citation>
    <scope>NUCLEOTIDE SEQUENCE [LARGE SCALE GENOMIC DNA]</scope>
</reference>
<reference key="2">
    <citation type="journal article" date="2012" name="Appl. Environ. Microbiol.">
        <title>Involvement of the major capsid protein and two early-expressed phage genes in the activity of the lactococcal abortive infection mechanism AbiT.</title>
        <authorList>
            <person name="Labrie S.J."/>
            <person name="Tremblay D.M."/>
            <person name="Moisan M."/>
            <person name="Villion M."/>
            <person name="Magadan A.H."/>
            <person name="Campanacci V."/>
            <person name="Cambillau C."/>
            <person name="Moineau S."/>
        </authorList>
    </citation>
    <scope>SUBCELLULAR LOCATION</scope>
</reference>
<reference key="3">
    <citation type="journal article" date="2013" name="J. Virol.">
        <title>Structure, adsorption to host, and infection mechanism of virulent lactococcal phage p2.</title>
        <authorList>
            <person name="Bebeacua C."/>
            <person name="Tremblay D."/>
            <person name="Farenc C."/>
            <person name="Chapot-Chartier M.P."/>
            <person name="Sadovskaya I."/>
            <person name="van Heel M."/>
            <person name="Veesler D."/>
            <person name="Moineau S."/>
            <person name="Cambillau C."/>
        </authorList>
    </citation>
    <scope>STRUCTURE BY ELECTRON MICROSCOPY (22 ANGSTROMS) OF THE TAIL</scope>
    <scope>FUNCTION</scope>
    <scope>SUBUNIT</scope>
    <scope>SUBCELLULAR LOCATION</scope>
    <scope>INTERACTION WITH THE TAIL TERMINATOR PROTEIN</scope>
    <scope>DOMAIN</scope>
</reference>
<sequence>MKLDYNSREIFFGNEALIVADMTKGSNGKPEFTNHKIVTGLVSVGSMEDQAETNSYPADDVPDHGVKKGATLLQGEMVFIQTDQALKEDMLGQQRTENGLGWSPTGNWKTKCVQYLIKGRKRDKVTGEFVDGYRVVVYPHLTPTAEATKESETDSVDGVDPIQWTLAVQATESDIYSNGGKKVPAIEYEIWGEQAKDFAKKMESGLFIMQPDTVLAGAITLVAPVIPNVTTATKGNNDGTIVVPDTLKDSKGGTVKVTSVIKDAHGKVATNGQLAPGVYIVTFSADGYEDVTAGVSVTDHS</sequence>
<evidence type="ECO:0000269" key="1">
    <source>
    </source>
</evidence>
<evidence type="ECO:0000269" key="2">
    <source>
    </source>
</evidence>
<evidence type="ECO:0000303" key="3">
    <source>
    </source>
</evidence>
<evidence type="ECO:0000305" key="4"/>
<organismHost>
    <name type="scientific">Lactococcus lactis</name>
    <dbReference type="NCBI Taxonomy" id="1358"/>
</organismHost>
<dbReference type="EMBL" id="GQ979703">
    <property type="protein sequence ID" value="AAF85633.1"/>
    <property type="molecule type" value="Genomic_DNA"/>
</dbReference>
<dbReference type="RefSeq" id="YP_009613491.1">
    <property type="nucleotide sequence ID" value="NC_042024.1"/>
</dbReference>
<dbReference type="ABCD" id="Q9MCC1">
    <property type="antibodies" value="1 sequenced antibody"/>
</dbReference>
<dbReference type="GeneID" id="40089866"/>
<dbReference type="Proteomes" id="UP000002348">
    <property type="component" value="Segment"/>
</dbReference>
<dbReference type="GO" id="GO:0098026">
    <property type="term" value="C:virus tail, tube"/>
    <property type="evidence" value="ECO:0000314"/>
    <property type="project" value="UniProtKB"/>
</dbReference>
<dbReference type="GO" id="GO:0099001">
    <property type="term" value="P:symbiont genome ejection through host cell envelope, long flexible tail mechanism"/>
    <property type="evidence" value="ECO:0007669"/>
    <property type="project" value="UniProtKB-KW"/>
</dbReference>
<dbReference type="InterPro" id="IPR010517">
    <property type="entry name" value="L_lac_phage_MSP"/>
</dbReference>
<dbReference type="InterPro" id="IPR046764">
    <property type="entry name" value="L_lac_phage_MSP_N"/>
</dbReference>
<dbReference type="InterPro" id="IPR046763">
    <property type="entry name" value="Phage_tube_C"/>
</dbReference>
<dbReference type="Pfam" id="PF06488">
    <property type="entry name" value="L_lac_phage_MSP"/>
    <property type="match status" value="1"/>
</dbReference>
<dbReference type="Pfam" id="PF20608">
    <property type="entry name" value="Phage_tube_C"/>
    <property type="match status" value="1"/>
</dbReference>
<dbReference type="PIRSF" id="PIRSF004357">
    <property type="entry name" value="L_lac_phage_MSP"/>
    <property type="match status" value="1"/>
</dbReference>
<feature type="chain" id="PRO_0000438223" description="Tail tube protein">
    <location>
        <begin position="1"/>
        <end position="301"/>
    </location>
</feature>
<accession>Q9MCC1</accession>
<name>TUBE_BPLP2</name>
<comment type="function">
    <text evidence="2">Forms the cylindrical rigid tail tube with a 4 nm wide central channel for DNA ejection. The tube is composed of 31 hexameric rings.</text>
</comment>
<comment type="subunit">
    <text evidence="2">Homohexamer. Interacts with the tail terminator protein.</text>
</comment>
<comment type="subcellular location">
    <subcellularLocation>
        <location evidence="1 2">Virion</location>
    </subcellularLocation>
    <text evidence="1 2">Constitutes the tail tube.</text>
</comment>
<comment type="domain">
    <text evidence="2">The C-terminus probably makes protruding decorations on the whole length of the tail tube.</text>
</comment>
<comment type="similarity">
    <text evidence="4">Belongs to the skunalikevirus tail tube protein family.</text>
</comment>
<proteinExistence type="evidence at protein level"/>
<protein>
    <recommendedName>
        <fullName evidence="3">Tail tube protein</fullName>
        <shortName evidence="4">TTP</shortName>
    </recommendedName>
    <alternativeName>
        <fullName evidence="4">Gene product 11</fullName>
        <shortName evidence="4">gp11</shortName>
    </alternativeName>
    <alternativeName>
        <fullName evidence="3">Major tail protein</fullName>
        <shortName evidence="3">MTP</shortName>
    </alternativeName>
</protein>
<keyword id="KW-1171">Viral genome ejection through host cell envelope</keyword>
<keyword id="KW-1243">Viral long flexible tail ejection system</keyword>
<keyword id="KW-1162">Viral penetration into host cytoplasm</keyword>
<keyword id="KW-1227">Viral tail protein</keyword>
<keyword id="KW-1228">Viral tail tube protein</keyword>
<keyword id="KW-0946">Virion</keyword>
<keyword id="KW-1160">Virus entry into host cell</keyword>